<proteinExistence type="evidence at protein level"/>
<protein>
    <recommendedName>
        <fullName evidence="8">Precursor of CEP3</fullName>
        <shortName evidence="8">PCEP3</shortName>
    </recommendedName>
    <component>
        <recommendedName>
            <fullName evidence="8">C-terminally encoded peptide 3</fullName>
            <shortName evidence="8">CEP3</shortName>
        </recommendedName>
    </component>
</protein>
<keyword id="KW-0052">Apoplast</keyword>
<keyword id="KW-0217">Developmental protein</keyword>
<keyword id="KW-0903">Direct protein sequencing</keyword>
<keyword id="KW-0372">Hormone</keyword>
<keyword id="KW-0379">Hydroxylation</keyword>
<keyword id="KW-1185">Reference proteome</keyword>
<keyword id="KW-0964">Secreted</keyword>
<keyword id="KW-0732">Signal</keyword>
<sequence>MATINVYVFAFIFLLTISVGSIEGRKLTKFTVTTSEEIRAGGSVLSSSPPTEPLESPPSHGVDTFRPTEPGHSPGIGHSVHN</sequence>
<dbReference type="EMBL" id="AC003040">
    <property type="protein sequence ID" value="AAC23759.1"/>
    <property type="molecule type" value="Genomic_DNA"/>
</dbReference>
<dbReference type="EMBL" id="CP002685">
    <property type="protein sequence ID" value="AEC07455.1"/>
    <property type="molecule type" value="Genomic_DNA"/>
</dbReference>
<dbReference type="EMBL" id="BT010787">
    <property type="protein sequence ID" value="AAR24154.1"/>
    <property type="molecule type" value="mRNA"/>
</dbReference>
<dbReference type="EMBL" id="BT011268">
    <property type="protein sequence ID" value="AAR92304.1"/>
    <property type="molecule type" value="mRNA"/>
</dbReference>
<dbReference type="PIR" id="T01133">
    <property type="entry name" value="T01133"/>
</dbReference>
<dbReference type="RefSeq" id="NP_179925.1">
    <property type="nucleotide sequence ID" value="NM_127908.2"/>
</dbReference>
<dbReference type="PaxDb" id="3702-AT2G23440.1"/>
<dbReference type="EnsemblPlants" id="AT2G23440.1">
    <property type="protein sequence ID" value="AT2G23440.1"/>
    <property type="gene ID" value="AT2G23440"/>
</dbReference>
<dbReference type="GeneID" id="816876"/>
<dbReference type="Gramene" id="AT2G23440.1">
    <property type="protein sequence ID" value="AT2G23440.1"/>
    <property type="gene ID" value="AT2G23440"/>
</dbReference>
<dbReference type="KEGG" id="ath:AT2G23440"/>
<dbReference type="Araport" id="AT2G23440"/>
<dbReference type="TAIR" id="AT2G23440">
    <property type="gene designation" value="CEP3"/>
</dbReference>
<dbReference type="eggNOG" id="ENOG502SXXE">
    <property type="taxonomic scope" value="Eukaryota"/>
</dbReference>
<dbReference type="HOGENOM" id="CLU_175062_1_0_1"/>
<dbReference type="InParanoid" id="O80460"/>
<dbReference type="OMA" id="VNVYLFA"/>
<dbReference type="PhylomeDB" id="O80460"/>
<dbReference type="PRO" id="PR:O80460"/>
<dbReference type="Proteomes" id="UP000006548">
    <property type="component" value="Chromosome 2"/>
</dbReference>
<dbReference type="ExpressionAtlas" id="O80460">
    <property type="expression patterns" value="baseline and differential"/>
</dbReference>
<dbReference type="GO" id="GO:0048046">
    <property type="term" value="C:apoplast"/>
    <property type="evidence" value="ECO:0000314"/>
    <property type="project" value="UniProtKB"/>
</dbReference>
<dbReference type="GO" id="GO:0005179">
    <property type="term" value="F:hormone activity"/>
    <property type="evidence" value="ECO:0000314"/>
    <property type="project" value="UniProtKB"/>
</dbReference>
<dbReference type="GO" id="GO:0006995">
    <property type="term" value="P:cellular response to nitrogen starvation"/>
    <property type="evidence" value="ECO:0000315"/>
    <property type="project" value="UniProtKB"/>
</dbReference>
<dbReference type="GO" id="GO:1902025">
    <property type="term" value="P:nitrate import"/>
    <property type="evidence" value="ECO:0000314"/>
    <property type="project" value="UniProtKB"/>
</dbReference>
<dbReference type="GO" id="GO:2000023">
    <property type="term" value="P:regulation of lateral root development"/>
    <property type="evidence" value="ECO:0000314"/>
    <property type="project" value="UniProtKB"/>
</dbReference>
<dbReference type="GO" id="GO:1901371">
    <property type="term" value="P:regulation of leaf morphogenesis"/>
    <property type="evidence" value="ECO:0000315"/>
    <property type="project" value="UniProtKB"/>
</dbReference>
<dbReference type="GO" id="GO:2000280">
    <property type="term" value="P:regulation of root development"/>
    <property type="evidence" value="ECO:0000314"/>
    <property type="project" value="UniProtKB"/>
</dbReference>
<dbReference type="GO" id="GO:0048831">
    <property type="term" value="P:regulation of shoot system development"/>
    <property type="evidence" value="ECO:0000315"/>
    <property type="project" value="UniProtKB"/>
</dbReference>
<dbReference type="GO" id="GO:0009733">
    <property type="term" value="P:response to auxin"/>
    <property type="evidence" value="ECO:0000270"/>
    <property type="project" value="UniProtKB"/>
</dbReference>
<dbReference type="GO" id="GO:0010037">
    <property type="term" value="P:response to carbon dioxide"/>
    <property type="evidence" value="ECO:0000270"/>
    <property type="project" value="UniProtKB"/>
</dbReference>
<dbReference type="GO" id="GO:0009642">
    <property type="term" value="P:response to light intensity"/>
    <property type="evidence" value="ECO:0000315"/>
    <property type="project" value="UniProtKB"/>
</dbReference>
<dbReference type="GO" id="GO:0090548">
    <property type="term" value="P:response to nitrate starvation"/>
    <property type="evidence" value="ECO:0000270"/>
    <property type="project" value="UniProtKB"/>
</dbReference>
<dbReference type="GO" id="GO:1901698">
    <property type="term" value="P:response to nitrogen compound"/>
    <property type="evidence" value="ECO:0000270"/>
    <property type="project" value="UniProtKB"/>
</dbReference>
<dbReference type="GO" id="GO:0006970">
    <property type="term" value="P:response to osmotic stress"/>
    <property type="evidence" value="ECO:0000270"/>
    <property type="project" value="UniProtKB"/>
</dbReference>
<dbReference type="GO" id="GO:0035864">
    <property type="term" value="P:response to potassium ion"/>
    <property type="evidence" value="ECO:0000270"/>
    <property type="project" value="UniProtKB"/>
</dbReference>
<dbReference type="GO" id="GO:0009651">
    <property type="term" value="P:response to salt stress"/>
    <property type="evidence" value="ECO:0000270"/>
    <property type="project" value="UniProtKB"/>
</dbReference>
<dbReference type="GO" id="GO:0009744">
    <property type="term" value="P:response to sucrose"/>
    <property type="evidence" value="ECO:0000315"/>
    <property type="project" value="UniProtKB"/>
</dbReference>
<dbReference type="GO" id="GO:0009266">
    <property type="term" value="P:response to temperature stimulus"/>
    <property type="evidence" value="ECO:0000315"/>
    <property type="project" value="UniProtKB"/>
</dbReference>
<dbReference type="GO" id="GO:0048364">
    <property type="term" value="P:root development"/>
    <property type="evidence" value="ECO:0000314"/>
    <property type="project" value="TAIR"/>
</dbReference>
<evidence type="ECO:0000250" key="1">
    <source>
        <dbReference type="UniProtKB" id="Q058G9"/>
    </source>
</evidence>
<evidence type="ECO:0000255" key="2"/>
<evidence type="ECO:0000256" key="3">
    <source>
        <dbReference type="SAM" id="MobiDB-lite"/>
    </source>
</evidence>
<evidence type="ECO:0000269" key="4">
    <source>
    </source>
</evidence>
<evidence type="ECO:0000269" key="5">
    <source>
    </source>
</evidence>
<evidence type="ECO:0000269" key="6">
    <source>
    </source>
</evidence>
<evidence type="ECO:0000269" key="7">
    <source>
    </source>
</evidence>
<evidence type="ECO:0000303" key="8">
    <source>
    </source>
</evidence>
<evidence type="ECO:0000305" key="9"/>
<evidence type="ECO:0000305" key="10">
    <source>
    </source>
</evidence>
<evidence type="ECO:0000312" key="11">
    <source>
        <dbReference type="Araport" id="AT2G23440"/>
    </source>
</evidence>
<evidence type="ECO:0000312" key="12">
    <source>
        <dbReference type="EMBL" id="AEC07455.1"/>
    </source>
</evidence>
<feature type="signal peptide" evidence="2">
    <location>
        <begin position="1"/>
        <end position="24"/>
    </location>
</feature>
<feature type="propeptide" id="PRO_0000439968" evidence="10">
    <location>
        <begin position="25"/>
        <end position="63"/>
    </location>
</feature>
<feature type="peptide" id="PRO_0000439969" description="C-terminally encoded peptide 3" evidence="7">
    <location>
        <begin position="64"/>
        <end position="78"/>
    </location>
</feature>
<feature type="propeptide" id="PRO_0000439970" evidence="10">
    <location>
        <begin position="79"/>
        <end position="82"/>
    </location>
</feature>
<feature type="region of interest" description="Disordered" evidence="3">
    <location>
        <begin position="40"/>
        <end position="82"/>
    </location>
</feature>
<feature type="modified residue" description="Hydroxyproline" evidence="6 7">
    <location>
        <position position="67"/>
    </location>
</feature>
<feature type="modified residue" description="Hydroxyproline" evidence="1">
    <location>
        <position position="70"/>
    </location>
</feature>
<feature type="modified residue" description="Hydroxyproline" evidence="6 7">
    <location>
        <position position="74"/>
    </location>
</feature>
<reference key="1">
    <citation type="journal article" date="1999" name="Nature">
        <title>Sequence and analysis of chromosome 2 of the plant Arabidopsis thaliana.</title>
        <authorList>
            <person name="Lin X."/>
            <person name="Kaul S."/>
            <person name="Rounsley S.D."/>
            <person name="Shea T.P."/>
            <person name="Benito M.-I."/>
            <person name="Town C.D."/>
            <person name="Fujii C.Y."/>
            <person name="Mason T.M."/>
            <person name="Bowman C.L."/>
            <person name="Barnstead M.E."/>
            <person name="Feldblyum T.V."/>
            <person name="Buell C.R."/>
            <person name="Ketchum K.A."/>
            <person name="Lee J.J."/>
            <person name="Ronning C.M."/>
            <person name="Koo H.L."/>
            <person name="Moffat K.S."/>
            <person name="Cronin L.A."/>
            <person name="Shen M."/>
            <person name="Pai G."/>
            <person name="Van Aken S."/>
            <person name="Umayam L."/>
            <person name="Tallon L.J."/>
            <person name="Gill J.E."/>
            <person name="Adams M.D."/>
            <person name="Carrera A.J."/>
            <person name="Creasy T.H."/>
            <person name="Goodman H.M."/>
            <person name="Somerville C.R."/>
            <person name="Copenhaver G.P."/>
            <person name="Preuss D."/>
            <person name="Nierman W.C."/>
            <person name="White O."/>
            <person name="Eisen J.A."/>
            <person name="Salzberg S.L."/>
            <person name="Fraser C.M."/>
            <person name="Venter J.C."/>
        </authorList>
    </citation>
    <scope>NUCLEOTIDE SEQUENCE [LARGE SCALE GENOMIC DNA]</scope>
    <source>
        <strain>cv. Columbia</strain>
    </source>
</reference>
<reference key="2">
    <citation type="journal article" date="2017" name="Plant J.">
        <title>Araport11: a complete reannotation of the Arabidopsis thaliana reference genome.</title>
        <authorList>
            <person name="Cheng C.Y."/>
            <person name="Krishnakumar V."/>
            <person name="Chan A.P."/>
            <person name="Thibaud-Nissen F."/>
            <person name="Schobel S."/>
            <person name="Town C.D."/>
        </authorList>
    </citation>
    <scope>GENOME REANNOTATION</scope>
    <source>
        <strain>cv. Columbia</strain>
    </source>
</reference>
<reference key="3">
    <citation type="submission" date="2003-11" db="EMBL/GenBank/DDBJ databases">
        <title>Arabidopsis cDNA clones.</title>
        <authorList>
            <person name="Cheuk R.F."/>
            <person name="Chen H."/>
            <person name="Kim C.J."/>
            <person name="Shinn P."/>
            <person name="Ecker J.R."/>
        </authorList>
    </citation>
    <scope>NUCLEOTIDE SEQUENCE [LARGE SCALE MRNA]</scope>
    <source>
        <strain>cv. Columbia</strain>
    </source>
</reference>
<reference key="4">
    <citation type="journal article" date="2008" name="Plant J.">
        <title>Identification of a biologically active, small, secreted peptide in Arabidopsis by in silico gene screening, followed by LC-MS-based structure analysis.</title>
        <authorList>
            <person name="Ohyama K."/>
            <person name="Ogawa M."/>
            <person name="Matsubayashi Y."/>
        </authorList>
    </citation>
    <scope>TISSUE SPECIFICITY</scope>
</reference>
<reference key="5">
    <citation type="journal article" date="2011" name="Arabidopsis Book">
        <title>Small post-translationally modified Peptide signals in Arabidopsis.</title>
        <authorList>
            <person name="Matsubayashi Y."/>
        </authorList>
    </citation>
    <scope>REVIEW</scope>
</reference>
<reference key="6">
    <citation type="journal article" date="2013" name="J. Exp. Bot.">
        <title>The CEP family in land plants: evolutionary analyses, expression studies, and role in Arabidopsis shoot development.</title>
        <authorList>
            <person name="Roberts I."/>
            <person name="Smith S."/>
            <person name="De Rybel B."/>
            <person name="Van Den Broeke J."/>
            <person name="Smet W."/>
            <person name="De Cokere S."/>
            <person name="Mispelaere M."/>
            <person name="De Smet I."/>
            <person name="Beeckman T."/>
        </authorList>
    </citation>
    <scope>TISSUE SPECIFICITY</scope>
    <scope>INDUCTION BY AUXIN; POTASSIUM AND NITROGEN</scope>
    <scope>GENE FAMILY</scope>
    <source>
        <strain>cv. Columbia</strain>
    </source>
</reference>
<reference key="7">
    <citation type="journal article" date="2013" name="J. Exp. Bot.">
        <title>CEP genes regulate root and shoot development in response to environmental cues and are specific to seed plants.</title>
        <authorList>
            <person name="Delay C."/>
            <person name="Imin N."/>
            <person name="Djordjevic M.A."/>
        </authorList>
    </citation>
    <scope>FUNCTION</scope>
    <scope>DISRUPTION PHENOTYPE</scope>
    <scope>INDUCTION BY OSMOTIC STRESS; CARBON DIOXIDE; NITROGEN DEPLETION AND NITRATE DEPLETION</scope>
    <scope>HYDROXYLATION AT PRO-67 AND PRO-74</scope>
    <scope>GENE FAMILY</scope>
    <scope>NOMENCLATURE</scope>
    <source>
        <strain>cv. Columbia</strain>
    </source>
</reference>
<reference key="8">
    <citation type="journal article" date="2014" name="Science">
        <title>Perception of root-derived peptides by shoot LRR-RKs mediates systemic N-demand signaling.</title>
        <authorList>
            <person name="Tabata R."/>
            <person name="Sumida K."/>
            <person name="Yoshii T."/>
            <person name="Ohyama K."/>
            <person name="Shinohara H."/>
            <person name="Matsubayashi Y."/>
        </authorList>
    </citation>
    <scope>PROTEIN SEQUENCE OF 64-78</scope>
    <scope>PTM</scope>
    <scope>FUNCTION</scope>
    <scope>HYDROXYLATION AT PRO-67 AND PRO-74</scope>
    <scope>INTERACTION WITH CEPR1</scope>
    <scope>INDUCTION BY NITROGEN DEPLETION</scope>
    <scope>SUBCELLULAR LOCATION</scope>
    <source>
        <strain>cv. No-0</strain>
    </source>
</reference>
<name>PCEP3_ARATH</name>
<gene>
    <name evidence="8" type="primary">CEP3</name>
    <name evidence="11" type="ordered locus">At2g23440</name>
    <name evidence="12" type="ORF">F26B6.9</name>
</gene>
<organism>
    <name type="scientific">Arabidopsis thaliana</name>
    <name type="common">Mouse-ear cress</name>
    <dbReference type="NCBI Taxonomy" id="3702"/>
    <lineage>
        <taxon>Eukaryota</taxon>
        <taxon>Viridiplantae</taxon>
        <taxon>Streptophyta</taxon>
        <taxon>Embryophyta</taxon>
        <taxon>Tracheophyta</taxon>
        <taxon>Spermatophyta</taxon>
        <taxon>Magnoliopsida</taxon>
        <taxon>eudicotyledons</taxon>
        <taxon>Gunneridae</taxon>
        <taxon>Pentapetalae</taxon>
        <taxon>rosids</taxon>
        <taxon>malvids</taxon>
        <taxon>Brassicales</taxon>
        <taxon>Brassicaceae</taxon>
        <taxon>Camelineae</taxon>
        <taxon>Arabidopsis</taxon>
    </lineage>
</organism>
<comment type="function">
    <text evidence="6 7">Extracellular signaling peptide that represses primary root growth rate and significantly inhibits lateral root formation. Promotes shoot growth. Modulates leaf morphology (PubMed:24179096). Regulates systemic nitrogen (N)-demand signaling. Mediates systemic up-regulation of genes involved in N uptake and assimilation pathways (PubMed:25324386).</text>
</comment>
<comment type="subunit">
    <text evidence="7">Interacts with the CEP receptor CEPR1.</text>
</comment>
<comment type="subcellular location">
    <molecule>C-terminally encoded peptide 3</molecule>
    <subcellularLocation>
        <location evidence="7">Secreted</location>
        <location evidence="7">Extracellular space</location>
        <location evidence="7">Apoplast</location>
    </subcellularLocation>
    <text evidence="7">Accumulates in xylem sap under nitrogen (N)-starved conditions.</text>
</comment>
<comment type="tissue specificity">
    <text evidence="4 5">Mostly expressed in roots (PubMed:18315543). Present in lateral roots (especially in vasculature), root-hypocotyl junction and cotyledons (PubMed:24179095).</text>
</comment>
<comment type="induction">
    <text evidence="5 7">Induced by auxin, but repressed by potassium (K) and nitrogen (N) (PubMed:24179095). Accumulates strongly in the roots under nitrogen depletion, and in the shoots under nitrate limitation (PubMed:24179095, PubMed:25324386). Also induced by osmotic stress (e.g. mannitol and NaCl). Strongly repressed in roots by carbon dioxide CO(2) (PubMed:24179095).</text>
</comment>
<comment type="PTM">
    <text evidence="7">The mature small signaling peptide is generated by proteolytic processing of the longer precursor.</text>
</comment>
<comment type="disruption phenotype">
    <text evidence="6">Larger root systems when grown under nitrogen-limiting, acidic, osmotic stress (e.g. mannitol) and high salt conditions, as well as in the presence of sucrose and under decreased or increased light irradiance. Reduced the lateral root density at low temperature (16 degrees Celsius). Increased root and shoot growth when grown hydroponically.</text>
</comment>
<comment type="similarity">
    <text evidence="9">Belongs to the C-terminally encoded plant signaling peptide (CEP) family.</text>
</comment>
<accession>O80460</accession>